<dbReference type="EMBL" id="AE006468">
    <property type="protein sequence ID" value="AAL20317.1"/>
    <property type="molecule type" value="Genomic_DNA"/>
</dbReference>
<dbReference type="RefSeq" id="NP_460358.1">
    <property type="nucleotide sequence ID" value="NC_003197.2"/>
</dbReference>
<dbReference type="RefSeq" id="WP_001738217.1">
    <property type="nucleotide sequence ID" value="NC_003197.2"/>
</dbReference>
<dbReference type="STRING" id="99287.STM1393"/>
<dbReference type="PaxDb" id="99287-STM1393"/>
<dbReference type="GeneID" id="1252911"/>
<dbReference type="KEGG" id="stm:STM1393"/>
<dbReference type="PATRIC" id="fig|99287.12.peg.1477"/>
<dbReference type="HOGENOM" id="CLU_157272_0_0_6"/>
<dbReference type="OMA" id="HPDIHDY"/>
<dbReference type="BioCyc" id="SENT99287:STM1393-MONOMER"/>
<dbReference type="PHI-base" id="PHI:555"/>
<dbReference type="Proteomes" id="UP000001014">
    <property type="component" value="Chromosome"/>
</dbReference>
<dbReference type="GO" id="GO:0005737">
    <property type="term" value="C:cytoplasm"/>
    <property type="evidence" value="ECO:0007669"/>
    <property type="project" value="UniProtKB-SubCell"/>
</dbReference>
<dbReference type="GO" id="GO:0005576">
    <property type="term" value="C:extracellular region"/>
    <property type="evidence" value="ECO:0007669"/>
    <property type="project" value="UniProtKB-SubCell"/>
</dbReference>
<dbReference type="GO" id="GO:0015031">
    <property type="term" value="P:protein transport"/>
    <property type="evidence" value="ECO:0007669"/>
    <property type="project" value="UniProtKB-KW"/>
</dbReference>
<dbReference type="NCBIfam" id="NF011895">
    <property type="entry name" value="PRK15368.1"/>
    <property type="match status" value="1"/>
</dbReference>
<feature type="chain" id="PRO_0000072126" description="Salmonella pathogenicity island 2 protein C">
    <location>
        <begin position="1"/>
        <end position="133"/>
    </location>
</feature>
<keyword id="KW-0963">Cytoplasm</keyword>
<keyword id="KW-0653">Protein transport</keyword>
<keyword id="KW-1185">Reference proteome</keyword>
<keyword id="KW-0964">Secreted</keyword>
<keyword id="KW-0813">Transport</keyword>
<keyword id="KW-0843">Virulence</keyword>
<sequence>MSEEGFMLAVLKGIPLIQDIRAEGNSRSWIMTIDGHPARGEIFSEAFSISLFLNDLESLPKPCLAYVTLLLAAHPDVHDYAIQLTADGGWLNGYYTTSSSSELIAIEIEKHLALTCILKNVIRNHHKLYSGGV</sequence>
<name>SPIC_SALTY</name>
<comment type="function">
    <text evidence="3 4">Virulence protein that plays a central role in mammalian macrophage infection, by inhibiting phagosome-lysosome fusion and cellular trafficking. May act by disrupting the function of the mammalian HOOK3 protein, a protein involved in the cellular traffic.</text>
</comment>
<comment type="subunit">
    <text evidence="1">Interacts with the mammalian NIPSNAP3A and HOOK3 proteins in infected cells.</text>
</comment>
<comment type="subcellular location">
    <subcellularLocation>
        <location>Secreted</location>
    </subcellularLocation>
    <subcellularLocation>
        <location>Cytoplasm</location>
    </subcellularLocation>
    <text>Translocated into the cytosol of macrophages via the Salmonella pathogenicity island 2 (SPI-2) type III secretion system that functions intracellularly to translocate proteins across the phagosomal membrane. Cytoplasmic in infected macrophages.</text>
</comment>
<comment type="induction">
    <text evidence="2 5 6 7 8 9">Highly induced 6.5 hours following entry into host cells (PubMed:9786194). Induced in macrophages (PubMed:10209748). Induced when residing in the host ileal loop, when in an acidic environment, during phosphate starvation, and in low magnesium (PubMed:16304611, PubMed:17630976, PubMed:19858298). Repressed by methyl-3,4-dephostatin (PubMed:32413287).</text>
</comment>
<comment type="caution">
    <text evidence="13">PubMed:12174087 and PubMed:12193612 report that SpiC is not translocated into the infected cell, and is localized in the bacterial cytoplasm. They show it is required for secretion of SseB and SseC virulence proteins into infected cells.</text>
</comment>
<proteinExistence type="evidence at transcript level"/>
<gene>
    <name type="primary">spiC</name>
    <name type="synonym">ssaB</name>
    <name type="ordered locus">STM1393</name>
</gene>
<organism>
    <name type="scientific">Salmonella typhimurium (strain LT2 / SGSC1412 / ATCC 700720)</name>
    <dbReference type="NCBI Taxonomy" id="99287"/>
    <lineage>
        <taxon>Bacteria</taxon>
        <taxon>Pseudomonadati</taxon>
        <taxon>Pseudomonadota</taxon>
        <taxon>Gammaproteobacteria</taxon>
        <taxon>Enterobacterales</taxon>
        <taxon>Enterobacteriaceae</taxon>
        <taxon>Salmonella</taxon>
    </lineage>
</organism>
<reference key="1">
    <citation type="journal article" date="2001" name="Nature">
        <title>Complete genome sequence of Salmonella enterica serovar Typhimurium LT2.</title>
        <authorList>
            <person name="McClelland M."/>
            <person name="Sanderson K.E."/>
            <person name="Spieth J."/>
            <person name="Clifton S.W."/>
            <person name="Latreille P."/>
            <person name="Courtney L."/>
            <person name="Porwollik S."/>
            <person name="Ali J."/>
            <person name="Dante M."/>
            <person name="Du F."/>
            <person name="Hou S."/>
            <person name="Layman D."/>
            <person name="Leonard S."/>
            <person name="Nguyen C."/>
            <person name="Scott K."/>
            <person name="Holmes A."/>
            <person name="Grewal N."/>
            <person name="Mulvaney E."/>
            <person name="Ryan E."/>
            <person name="Sun H."/>
            <person name="Florea L."/>
            <person name="Miller W."/>
            <person name="Stoneking T."/>
            <person name="Nhan M."/>
            <person name="Waterston R."/>
            <person name="Wilson R.K."/>
        </authorList>
    </citation>
    <scope>NUCLEOTIDE SEQUENCE [LARGE SCALE GENOMIC DNA]</scope>
    <source>
        <strain>LT2 / SGSC1412 / ATCC 700720</strain>
    </source>
</reference>
<reference key="2">
    <citation type="journal article" date="1998" name="Mol. Microbiol.">
        <title>Macrophage-dependent induction of the Salmonella pathogenicity island 2 type III secretion system and its role in intracellular survival.</title>
        <authorList>
            <person name="Cirillo D.M."/>
            <person name="Valdivia R.H."/>
            <person name="Monack D.M."/>
            <person name="Falkow S."/>
        </authorList>
    </citation>
    <scope>INDUCTION</scope>
</reference>
<reference key="3">
    <citation type="journal article" date="1999" name="Mol. Microbiol.">
        <title>Environmental regulation of Salmonella pathogenicity island 2 gene expression.</title>
        <authorList>
            <person name="Deiwick J."/>
            <person name="Nikolaus T."/>
            <person name="Erdogan S."/>
            <person name="Hensel M."/>
        </authorList>
    </citation>
    <scope>INDUCTION</scope>
</reference>
<reference key="4">
    <citation type="journal article" date="2002" name="Cell. Microbiol.">
        <title>SpiC is required for secretion of Salmonella pathogenicity island 2 type III secretion system proteins.</title>
        <authorList>
            <person name="Yu X.-J."/>
            <person name="Ruiz-Albert J."/>
            <person name="Unsworth K.E."/>
            <person name="Garvis S."/>
            <person name="Liu M."/>
            <person name="Holden D.W."/>
        </authorList>
    </citation>
    <scope>FUNCTION</scope>
    <scope>SUBCELLULAR LOCATION</scope>
    <source>
        <strain>ATCC 14028 / SGSC 2980 / CDC 6516-60 / NCTC 12023</strain>
    </source>
</reference>
<reference key="5">
    <citation type="journal article" date="2002" name="J. Bacteriol.">
        <title>SpiC is required for translocation of Salmonella pathogenicity island 2 effectors and secretion of translocon proteins SseB and SseC.</title>
        <authorList>
            <person name="Freeman J.A."/>
            <person name="Rappl C."/>
            <person name="Kuhle V."/>
            <person name="Hensel M."/>
            <person name="Miller S.I."/>
        </authorList>
    </citation>
    <scope>FUNCTION</scope>
    <scope>SUBCELLULAR LOCATION</scope>
    <source>
        <strain>ATCC 14028 / SGSC 2980 / CDC 6516-60 / NCTC 12023</strain>
    </source>
</reference>
<reference key="6">
    <citation type="journal article" date="2005" name="PLoS Pathog.">
        <title>Salmonella pathogenicity island 2 is expressed prior to penetrating the intestine.</title>
        <authorList>
            <person name="Brown N.F."/>
            <person name="Vallance B.A."/>
            <person name="Coombes B.K."/>
            <person name="Valdez Y."/>
            <person name="Coburn B.A."/>
            <person name="Finlay B.B."/>
        </authorList>
    </citation>
    <scope>INDUCTION</scope>
    <source>
        <strain evidence="10">SL1344</strain>
    </source>
</reference>
<reference key="7">
    <citation type="journal article" date="2007" name="Mol. Microbiol.">
        <title>The response regulator SsrB activates expression of diverse Salmonella pathogenicity island 2 promoters and counters silencing by the nucleoid-associated protein H-NS.</title>
        <authorList>
            <person name="Walthers D."/>
            <person name="Carroll R.K."/>
            <person name="Navarre W.W."/>
            <person name="Libby S.J."/>
            <person name="Fang F.C."/>
            <person name="Kenney L.J."/>
        </authorList>
    </citation>
    <scope>INDUCTION</scope>
    <source>
        <strain evidence="11">14028s / SGSC 2262</strain>
    </source>
</reference>
<reference key="8">
    <citation type="journal article" date="2010" name="Infect. Immun.">
        <title>Systematic analysis of the SsrAB virulon of Salmonella enterica.</title>
        <authorList>
            <person name="Xu X."/>
            <person name="Hensel M."/>
        </authorList>
    </citation>
    <scope>INDUCTION</scope>
    <source>
        <strain evidence="12">ATCC 14028 / SGSC 2980 / CDC 6516-60 / NCTC 12023</strain>
    </source>
</reference>
<reference key="9">
    <citation type="journal article" date="2020" name="Cell Chem. Biol.">
        <title>Targeting Two-Component Systems Uncovers a Small-Molecule Inhibitor of Salmonella Virulence.</title>
        <authorList>
            <person name="Tsai C.N."/>
            <person name="MacNair C.R."/>
            <person name="Cao M.P.T."/>
            <person name="Perry J.N."/>
            <person name="Magolan J."/>
            <person name="Brown E.D."/>
            <person name="Coombes B.K."/>
        </authorList>
    </citation>
    <scope>INDUCTION</scope>
</reference>
<protein>
    <recommendedName>
        <fullName>Salmonella pathogenicity island 2 protein C</fullName>
    </recommendedName>
    <alternativeName>
        <fullName>Secretion system apparatus protein B</fullName>
    </alternativeName>
</protein>
<accession>P0CZ04</accession>
<accession>P74863</accession>
<evidence type="ECO:0000250" key="1"/>
<evidence type="ECO:0000269" key="2">
    <source>
    </source>
</evidence>
<evidence type="ECO:0000269" key="3">
    <source>
    </source>
</evidence>
<evidence type="ECO:0000269" key="4">
    <source>
    </source>
</evidence>
<evidence type="ECO:0000269" key="5">
    <source>
    </source>
</evidence>
<evidence type="ECO:0000269" key="6">
    <source>
    </source>
</evidence>
<evidence type="ECO:0000269" key="7">
    <source>
    </source>
</evidence>
<evidence type="ECO:0000269" key="8">
    <source>
    </source>
</evidence>
<evidence type="ECO:0000269" key="9">
    <source>
    </source>
</evidence>
<evidence type="ECO:0000303" key="10">
    <source>
    </source>
</evidence>
<evidence type="ECO:0000303" key="11">
    <source>
    </source>
</evidence>
<evidence type="ECO:0000303" key="12">
    <source>
    </source>
</evidence>
<evidence type="ECO:0000305" key="13"/>